<sequence length="217" mass="23264">MNQTLLSSFGTPFERVELALDALREGRGVMVLDDEDRENEGDMIFPAETMTVEQMALTIRHGSGIVCLCITEDRRKQLDLPMMVQNNTSAYGTGFTVTIEAAEGVTTGVSAADRVTTVRAAIADGAKPSDLNRPGHVFPLRAQAGGVLTRGGHTEATIDLMTLAGFKPAGVLCELTNDNGTMARAPECIAFAGQHNMAVVTIEDLVAYRLAHERKVS</sequence>
<feature type="chain" id="PRO_1000077266" description="3,4-dihydroxy-2-butanone 4-phosphate synthase">
    <location>
        <begin position="1"/>
        <end position="217"/>
    </location>
</feature>
<feature type="binding site" evidence="1">
    <location>
        <begin position="37"/>
        <end position="38"/>
    </location>
    <ligand>
        <name>D-ribulose 5-phosphate</name>
        <dbReference type="ChEBI" id="CHEBI:58121"/>
    </ligand>
</feature>
<feature type="binding site" evidence="1">
    <location>
        <position position="38"/>
    </location>
    <ligand>
        <name>Mg(2+)</name>
        <dbReference type="ChEBI" id="CHEBI:18420"/>
        <label>1</label>
    </ligand>
</feature>
<feature type="binding site" evidence="1">
    <location>
        <position position="38"/>
    </location>
    <ligand>
        <name>Mg(2+)</name>
        <dbReference type="ChEBI" id="CHEBI:18420"/>
        <label>2</label>
    </ligand>
</feature>
<feature type="binding site" evidence="1">
    <location>
        <position position="42"/>
    </location>
    <ligand>
        <name>D-ribulose 5-phosphate</name>
        <dbReference type="ChEBI" id="CHEBI:58121"/>
    </ligand>
</feature>
<feature type="binding site" evidence="1">
    <location>
        <begin position="150"/>
        <end position="154"/>
    </location>
    <ligand>
        <name>D-ribulose 5-phosphate</name>
        <dbReference type="ChEBI" id="CHEBI:58121"/>
    </ligand>
</feature>
<feature type="binding site" evidence="1">
    <location>
        <position position="153"/>
    </location>
    <ligand>
        <name>Mg(2+)</name>
        <dbReference type="ChEBI" id="CHEBI:18420"/>
        <label>2</label>
    </ligand>
</feature>
<feature type="binding site" evidence="1">
    <location>
        <position position="174"/>
    </location>
    <ligand>
        <name>D-ribulose 5-phosphate</name>
        <dbReference type="ChEBI" id="CHEBI:58121"/>
    </ligand>
</feature>
<feature type="site" description="Essential for catalytic activity" evidence="1">
    <location>
        <position position="136"/>
    </location>
</feature>
<feature type="site" description="Essential for catalytic activity" evidence="1">
    <location>
        <position position="174"/>
    </location>
</feature>
<evidence type="ECO:0000255" key="1">
    <source>
        <dbReference type="HAMAP-Rule" id="MF_00180"/>
    </source>
</evidence>
<comment type="function">
    <text evidence="1">Catalyzes the conversion of D-ribulose 5-phosphate to formate and 3,4-dihydroxy-2-butanone 4-phosphate.</text>
</comment>
<comment type="catalytic activity">
    <reaction evidence="1">
        <text>D-ribulose 5-phosphate = (2S)-2-hydroxy-3-oxobutyl phosphate + formate + H(+)</text>
        <dbReference type="Rhea" id="RHEA:18457"/>
        <dbReference type="ChEBI" id="CHEBI:15378"/>
        <dbReference type="ChEBI" id="CHEBI:15740"/>
        <dbReference type="ChEBI" id="CHEBI:58121"/>
        <dbReference type="ChEBI" id="CHEBI:58830"/>
        <dbReference type="EC" id="4.1.99.12"/>
    </reaction>
</comment>
<comment type="cofactor">
    <cofactor evidence="1">
        <name>Mg(2+)</name>
        <dbReference type="ChEBI" id="CHEBI:18420"/>
    </cofactor>
    <cofactor evidence="1">
        <name>Mn(2+)</name>
        <dbReference type="ChEBI" id="CHEBI:29035"/>
    </cofactor>
    <text evidence="1">Binds 2 divalent metal cations per subunit. Magnesium or manganese.</text>
</comment>
<comment type="pathway">
    <text evidence="1">Cofactor biosynthesis; riboflavin biosynthesis; 2-hydroxy-3-oxobutyl phosphate from D-ribulose 5-phosphate: step 1/1.</text>
</comment>
<comment type="subunit">
    <text evidence="1">Homodimer.</text>
</comment>
<comment type="similarity">
    <text evidence="1">Belongs to the DHBP synthase family.</text>
</comment>
<reference key="1">
    <citation type="submission" date="2007-11" db="EMBL/GenBank/DDBJ databases">
        <authorList>
            <consortium name="The Salmonella enterica serovar Arizonae Genome Sequencing Project"/>
            <person name="McClelland M."/>
            <person name="Sanderson E.K."/>
            <person name="Porwollik S."/>
            <person name="Spieth J."/>
            <person name="Clifton W.S."/>
            <person name="Fulton R."/>
            <person name="Chunyan W."/>
            <person name="Wollam A."/>
            <person name="Shah N."/>
            <person name="Pepin K."/>
            <person name="Bhonagiri V."/>
            <person name="Nash W."/>
            <person name="Johnson M."/>
            <person name="Thiruvilangam P."/>
            <person name="Wilson R."/>
        </authorList>
    </citation>
    <scope>NUCLEOTIDE SEQUENCE [LARGE SCALE GENOMIC DNA]</scope>
    <source>
        <strain>ATCC BAA-731 / CDC346-86 / RSK2980</strain>
    </source>
</reference>
<proteinExistence type="inferred from homology"/>
<gene>
    <name evidence="1" type="primary">ribB</name>
    <name type="ordered locus">SARI_04433</name>
</gene>
<protein>
    <recommendedName>
        <fullName evidence="1">3,4-dihydroxy-2-butanone 4-phosphate synthase</fullName>
        <shortName evidence="1">DHBP synthase</shortName>
        <ecNumber evidence="1">4.1.99.12</ecNumber>
    </recommendedName>
</protein>
<accession>A9MPW6</accession>
<organism>
    <name type="scientific">Salmonella arizonae (strain ATCC BAA-731 / CDC346-86 / RSK2980)</name>
    <dbReference type="NCBI Taxonomy" id="41514"/>
    <lineage>
        <taxon>Bacteria</taxon>
        <taxon>Pseudomonadati</taxon>
        <taxon>Pseudomonadota</taxon>
        <taxon>Gammaproteobacteria</taxon>
        <taxon>Enterobacterales</taxon>
        <taxon>Enterobacteriaceae</taxon>
        <taxon>Salmonella</taxon>
    </lineage>
</organism>
<name>RIBB_SALAR</name>
<dbReference type="EC" id="4.1.99.12" evidence="1"/>
<dbReference type="EMBL" id="CP000880">
    <property type="protein sequence ID" value="ABX24209.1"/>
    <property type="molecule type" value="Genomic_DNA"/>
</dbReference>
<dbReference type="SMR" id="A9MPW6"/>
<dbReference type="STRING" id="41514.SARI_04433"/>
<dbReference type="KEGG" id="ses:SARI_04433"/>
<dbReference type="HOGENOM" id="CLU_020273_3_0_6"/>
<dbReference type="UniPathway" id="UPA00275">
    <property type="reaction ID" value="UER00399"/>
</dbReference>
<dbReference type="Proteomes" id="UP000002084">
    <property type="component" value="Chromosome"/>
</dbReference>
<dbReference type="GO" id="GO:0005829">
    <property type="term" value="C:cytosol"/>
    <property type="evidence" value="ECO:0007669"/>
    <property type="project" value="TreeGrafter"/>
</dbReference>
<dbReference type="GO" id="GO:0008686">
    <property type="term" value="F:3,4-dihydroxy-2-butanone-4-phosphate synthase activity"/>
    <property type="evidence" value="ECO:0007669"/>
    <property type="project" value="UniProtKB-UniRule"/>
</dbReference>
<dbReference type="GO" id="GO:0000287">
    <property type="term" value="F:magnesium ion binding"/>
    <property type="evidence" value="ECO:0007669"/>
    <property type="project" value="UniProtKB-UniRule"/>
</dbReference>
<dbReference type="GO" id="GO:0030145">
    <property type="term" value="F:manganese ion binding"/>
    <property type="evidence" value="ECO:0007669"/>
    <property type="project" value="UniProtKB-UniRule"/>
</dbReference>
<dbReference type="GO" id="GO:0009231">
    <property type="term" value="P:riboflavin biosynthetic process"/>
    <property type="evidence" value="ECO:0007669"/>
    <property type="project" value="UniProtKB-UniRule"/>
</dbReference>
<dbReference type="FunFam" id="3.90.870.10:FF:000002">
    <property type="entry name" value="3,4-dihydroxy-2-butanone 4-phosphate synthase"/>
    <property type="match status" value="1"/>
</dbReference>
<dbReference type="Gene3D" id="3.90.870.10">
    <property type="entry name" value="DHBP synthase"/>
    <property type="match status" value="1"/>
</dbReference>
<dbReference type="HAMAP" id="MF_00180">
    <property type="entry name" value="RibB"/>
    <property type="match status" value="1"/>
</dbReference>
<dbReference type="InterPro" id="IPR017945">
    <property type="entry name" value="DHBP_synth_RibB-like_a/b_dom"/>
</dbReference>
<dbReference type="InterPro" id="IPR000422">
    <property type="entry name" value="DHBP_synthase_RibB"/>
</dbReference>
<dbReference type="NCBIfam" id="TIGR00506">
    <property type="entry name" value="ribB"/>
    <property type="match status" value="1"/>
</dbReference>
<dbReference type="PANTHER" id="PTHR21327:SF38">
    <property type="entry name" value="3,4-DIHYDROXY-2-BUTANONE 4-PHOSPHATE SYNTHASE"/>
    <property type="match status" value="1"/>
</dbReference>
<dbReference type="PANTHER" id="PTHR21327">
    <property type="entry name" value="GTP CYCLOHYDROLASE II-RELATED"/>
    <property type="match status" value="1"/>
</dbReference>
<dbReference type="Pfam" id="PF00926">
    <property type="entry name" value="DHBP_synthase"/>
    <property type="match status" value="1"/>
</dbReference>
<dbReference type="SUPFAM" id="SSF55821">
    <property type="entry name" value="YrdC/RibB"/>
    <property type="match status" value="1"/>
</dbReference>
<keyword id="KW-0456">Lyase</keyword>
<keyword id="KW-0460">Magnesium</keyword>
<keyword id="KW-0464">Manganese</keyword>
<keyword id="KW-0479">Metal-binding</keyword>
<keyword id="KW-1185">Reference proteome</keyword>
<keyword id="KW-0686">Riboflavin biosynthesis</keyword>